<keyword id="KW-0009">Actin-binding</keyword>
<keyword id="KW-0963">Cytoplasm</keyword>
<keyword id="KW-0489">Methyltransferase</keyword>
<keyword id="KW-1185">Reference proteome</keyword>
<keyword id="KW-0949">S-adenosyl-L-methionine</keyword>
<keyword id="KW-0808">Transferase</keyword>
<accession>B7ZUF3</accession>
<accession>A4IGP7</accession>
<accession>Q28I16</accession>
<sequence>MGKKSRVKTQKSGSGAAAAVSPKEMLNLISELLQKCSNPNSTPGREWEEYVQIRGLVEKIRKKQRGLSVVFDGKREDYFPELMEWCKENGASTDGFELVEFPEEGFGLKATREIKAEELFLWVPRKLLMTVESAKGSVLGPLYSQDRILQAMGNITLAFHLLCERADPNSFWLPYIKTLPNEYDTPLYFNEDEVQYLQSTQAILDVFSQYKNTARQYAYFYKVIQTHPNANKLPLKDSFTFDDYRWAVSSVMTRQNQIPTEDGSRVTLALIPLWDMCNHTNGLITTGYNLEDDRCECVALQDFKSGEQIYIFYGTRSNAEFVIHNGFFFENNLHDRVKIKLGVSKSDRLYAMKAEVLARAGIPTSSVFALHVTEPPISAQLLAFLRVFCMNEDELKGHLIGDHAIDKIFTLGNSEFPVSWENEIKLWTFLEARASLLLKTYKTTVEDDNKVLEQPDMTFHSAMAIKLRRVEKEILEKALKSASDNRKLYSKNSEEGTPLPKYEASNIAFVENSVADSKLPVVLKSLDDEEVKLQEAITISEITENGFLNDKDLLPNGTKSENDSFLAEDNQQETGNAKDFCS</sequence>
<feature type="chain" id="PRO_0000408344" description="Actin-histidine N-methyltransferase">
    <location>
        <begin position="1"/>
        <end position="582"/>
    </location>
</feature>
<feature type="domain" description="SET" evidence="2">
    <location>
        <begin position="94"/>
        <end position="314"/>
    </location>
</feature>
<feature type="region of interest" description="Disordered" evidence="4">
    <location>
        <begin position="550"/>
        <end position="582"/>
    </location>
</feature>
<feature type="binding site" evidence="1">
    <location>
        <position position="75"/>
    </location>
    <ligand>
        <name>S-adenosyl-L-methionine</name>
        <dbReference type="ChEBI" id="CHEBI:59789"/>
    </ligand>
</feature>
<feature type="binding site" evidence="1">
    <location>
        <begin position="104"/>
        <end position="106"/>
    </location>
    <ligand>
        <name>S-adenosyl-L-methionine</name>
        <dbReference type="ChEBI" id="CHEBI:59789"/>
    </ligand>
</feature>
<feature type="binding site" evidence="1">
    <location>
        <position position="254"/>
    </location>
    <ligand>
        <name>S-adenosyl-L-methionine</name>
        <dbReference type="ChEBI" id="CHEBI:59789"/>
    </ligand>
</feature>
<feature type="binding site" evidence="1">
    <location>
        <begin position="275"/>
        <end position="279"/>
    </location>
    <ligand>
        <name>S-adenosyl-L-methionine</name>
        <dbReference type="ChEBI" id="CHEBI:59789"/>
    </ligand>
</feature>
<feature type="binding site" evidence="1">
    <location>
        <begin position="325"/>
        <end position="327"/>
    </location>
    <ligand>
        <name>S-adenosyl-L-methionine</name>
        <dbReference type="ChEBI" id="CHEBI:59789"/>
    </ligand>
</feature>
<feature type="sequence conflict" description="In Ref. 1; CAJ81720." evidence="6" ref="1">
    <location>
        <position position="16"/>
    </location>
</feature>
<feature type="sequence conflict" description="In Ref. 2; AAI35195." evidence="6" ref="2">
    <original>G</original>
    <variation>S</variation>
    <location>
        <position position="282"/>
    </location>
</feature>
<feature type="sequence conflict" description="In Ref. 1; CAJ81720." evidence="6" ref="1">
    <original>S</original>
    <variation>C</variation>
    <location>
        <position position="564"/>
    </location>
</feature>
<dbReference type="EC" id="2.1.1.85" evidence="1"/>
<dbReference type="EMBL" id="CR760640">
    <property type="protein sequence ID" value="CAJ81720.1"/>
    <property type="molecule type" value="mRNA"/>
</dbReference>
<dbReference type="EMBL" id="BC135194">
    <property type="protein sequence ID" value="AAI35195.1"/>
    <property type="molecule type" value="mRNA"/>
</dbReference>
<dbReference type="EMBL" id="BC171209">
    <property type="protein sequence ID" value="AAI71209.1"/>
    <property type="molecule type" value="mRNA"/>
</dbReference>
<dbReference type="RefSeq" id="NP_001016577.1">
    <property type="nucleotide sequence ID" value="NM_001016577.2"/>
</dbReference>
<dbReference type="RefSeq" id="XP_012823880.1">
    <property type="nucleotide sequence ID" value="XM_012968426.3"/>
</dbReference>
<dbReference type="SMR" id="B7ZUF3"/>
<dbReference type="FunCoup" id="B7ZUF3">
    <property type="interactions" value="3141"/>
</dbReference>
<dbReference type="STRING" id="8364.ENSXETP00000049574"/>
<dbReference type="PaxDb" id="8364-ENSXETP00000062313"/>
<dbReference type="GeneID" id="549331"/>
<dbReference type="KEGG" id="xtr:549331"/>
<dbReference type="AGR" id="Xenbase:XB-GENE-1016707"/>
<dbReference type="CTD" id="84193"/>
<dbReference type="Xenbase" id="XB-GENE-1016707">
    <property type="gene designation" value="setd3"/>
</dbReference>
<dbReference type="eggNOG" id="KOG1337">
    <property type="taxonomic scope" value="Eukaryota"/>
</dbReference>
<dbReference type="HOGENOM" id="CLU_028272_0_0_1"/>
<dbReference type="InParanoid" id="B7ZUF3"/>
<dbReference type="OrthoDB" id="441812at2759"/>
<dbReference type="PhylomeDB" id="B7ZUF3"/>
<dbReference type="TreeFam" id="TF354226"/>
<dbReference type="Proteomes" id="UP000008143">
    <property type="component" value="Chromosome 8"/>
</dbReference>
<dbReference type="Bgee" id="ENSXETG00000011436">
    <property type="expression patterns" value="Expressed in skeletal muscle tissue and 15 other cell types or tissues"/>
</dbReference>
<dbReference type="GO" id="GO:0005737">
    <property type="term" value="C:cytoplasm"/>
    <property type="evidence" value="ECO:0000250"/>
    <property type="project" value="UniProtKB"/>
</dbReference>
<dbReference type="GO" id="GO:0003779">
    <property type="term" value="F:actin binding"/>
    <property type="evidence" value="ECO:0007669"/>
    <property type="project" value="UniProtKB-KW"/>
</dbReference>
<dbReference type="GO" id="GO:0046975">
    <property type="term" value="F:histone H3K36 methyltransferase activity"/>
    <property type="evidence" value="ECO:0000250"/>
    <property type="project" value="UniProtKB"/>
</dbReference>
<dbReference type="GO" id="GO:0018064">
    <property type="term" value="F:protein-L-histidine N-tele-methyltransferase activity"/>
    <property type="evidence" value="ECO:0000250"/>
    <property type="project" value="UniProtKB"/>
</dbReference>
<dbReference type="GO" id="GO:0003713">
    <property type="term" value="F:transcription coactivator activity"/>
    <property type="evidence" value="ECO:0000250"/>
    <property type="project" value="UniProtKB"/>
</dbReference>
<dbReference type="GO" id="GO:0030047">
    <property type="term" value="P:actin modification"/>
    <property type="evidence" value="ECO:0000250"/>
    <property type="project" value="UniProtKB"/>
</dbReference>
<dbReference type="GO" id="GO:0018021">
    <property type="term" value="P:peptidyl-histidine methylation"/>
    <property type="evidence" value="ECO:0000250"/>
    <property type="project" value="UniProtKB"/>
</dbReference>
<dbReference type="GO" id="GO:0045893">
    <property type="term" value="P:positive regulation of DNA-templated transcription"/>
    <property type="evidence" value="ECO:0000250"/>
    <property type="project" value="UniProtKB"/>
</dbReference>
<dbReference type="CDD" id="cd19176">
    <property type="entry name" value="SET_SETD3"/>
    <property type="match status" value="1"/>
</dbReference>
<dbReference type="FunFam" id="3.90.1410.10:FF:000001">
    <property type="entry name" value="histone-lysine N-methyltransferase setd3 isoform X1"/>
    <property type="match status" value="1"/>
</dbReference>
<dbReference type="FunFam" id="3.90.1420.10:FF:000001">
    <property type="entry name" value="histone-lysine N-methyltransferase setd3 isoform X1"/>
    <property type="match status" value="1"/>
</dbReference>
<dbReference type="Gene3D" id="3.90.1420.10">
    <property type="entry name" value="Rubisco LSMT, substrate-binding domain"/>
    <property type="match status" value="1"/>
</dbReference>
<dbReference type="Gene3D" id="3.90.1410.10">
    <property type="entry name" value="set domain protein methyltransferase, domain 1"/>
    <property type="match status" value="1"/>
</dbReference>
<dbReference type="InterPro" id="IPR015353">
    <property type="entry name" value="Rubisco_LSMT_subst-bd"/>
</dbReference>
<dbReference type="InterPro" id="IPR036464">
    <property type="entry name" value="Rubisco_LSMT_subst-bd_sf"/>
</dbReference>
<dbReference type="InterPro" id="IPR001214">
    <property type="entry name" value="SET_dom"/>
</dbReference>
<dbReference type="InterPro" id="IPR046341">
    <property type="entry name" value="SET_dom_sf"/>
</dbReference>
<dbReference type="InterPro" id="IPR025785">
    <property type="entry name" value="SETD3"/>
</dbReference>
<dbReference type="InterPro" id="IPR044428">
    <property type="entry name" value="SETD3_SET"/>
</dbReference>
<dbReference type="InterPro" id="IPR050600">
    <property type="entry name" value="SETD3_SETD6_MTase"/>
</dbReference>
<dbReference type="PANTHER" id="PTHR13271:SF47">
    <property type="entry name" value="ACTIN-HISTIDINE N-METHYLTRANSFERASE"/>
    <property type="match status" value="1"/>
</dbReference>
<dbReference type="PANTHER" id="PTHR13271">
    <property type="entry name" value="UNCHARACTERIZED PUTATIVE METHYLTRANSFERASE"/>
    <property type="match status" value="1"/>
</dbReference>
<dbReference type="Pfam" id="PF09273">
    <property type="entry name" value="Rubis-subs-bind"/>
    <property type="match status" value="1"/>
</dbReference>
<dbReference type="Pfam" id="PF00856">
    <property type="entry name" value="SET"/>
    <property type="match status" value="1"/>
</dbReference>
<dbReference type="SUPFAM" id="SSF81822">
    <property type="entry name" value="RuBisCo LSMT C-terminal, substrate-binding domain"/>
    <property type="match status" value="1"/>
</dbReference>
<dbReference type="SUPFAM" id="SSF82199">
    <property type="entry name" value="SET domain"/>
    <property type="match status" value="1"/>
</dbReference>
<dbReference type="PROSITE" id="PS51565">
    <property type="entry name" value="SAM_MT85_SETD3"/>
    <property type="match status" value="1"/>
</dbReference>
<dbReference type="PROSITE" id="PS50280">
    <property type="entry name" value="SET"/>
    <property type="match status" value="1"/>
</dbReference>
<name>SETD3_XENTR</name>
<evidence type="ECO:0000250" key="1">
    <source>
        <dbReference type="UniProtKB" id="Q86TU7"/>
    </source>
</evidence>
<evidence type="ECO:0000255" key="2">
    <source>
        <dbReference type="PROSITE-ProRule" id="PRU00190"/>
    </source>
</evidence>
<evidence type="ECO:0000255" key="3">
    <source>
        <dbReference type="PROSITE-ProRule" id="PRU00898"/>
    </source>
</evidence>
<evidence type="ECO:0000256" key="4">
    <source>
        <dbReference type="SAM" id="MobiDB-lite"/>
    </source>
</evidence>
<evidence type="ECO:0000303" key="5">
    <source ref="1"/>
</evidence>
<evidence type="ECO:0000305" key="6"/>
<comment type="function">
    <text evidence="1">Protein-histidine N-methyltransferase that specifically mediates 3-methylhistidine (tele-methylhistidine) methylation of actin at 'His-73'. Does not have protein-lysine N-methyltransferase activity and probably only catalyzes histidine methylation of actin.</text>
</comment>
<comment type="catalytic activity">
    <reaction evidence="1">
        <text>L-histidyl-[protein] + S-adenosyl-L-methionine = N(tele)-methyl-L-histidyl-[protein] + S-adenosyl-L-homocysteine + H(+)</text>
        <dbReference type="Rhea" id="RHEA:19369"/>
        <dbReference type="Rhea" id="RHEA-COMP:9745"/>
        <dbReference type="Rhea" id="RHEA-COMP:11600"/>
        <dbReference type="ChEBI" id="CHEBI:15378"/>
        <dbReference type="ChEBI" id="CHEBI:16367"/>
        <dbReference type="ChEBI" id="CHEBI:29979"/>
        <dbReference type="ChEBI" id="CHEBI:57856"/>
        <dbReference type="ChEBI" id="CHEBI:59789"/>
        <dbReference type="EC" id="2.1.1.85"/>
    </reaction>
</comment>
<comment type="subcellular location">
    <subcellularLocation>
        <location evidence="1">Cytoplasm</location>
    </subcellularLocation>
</comment>
<comment type="domain">
    <text evidence="1">The SET domain specifically recognizes and binds actin, suggesting that it does not accommodate substrates diverging from actin.</text>
</comment>
<comment type="similarity">
    <text evidence="3">Belongs to the class V-like SAM-binding methyltransferase superfamily. SETD3 actin-histidine methyltransferase family.</text>
</comment>
<organism>
    <name type="scientific">Xenopus tropicalis</name>
    <name type="common">Western clawed frog</name>
    <name type="synonym">Silurana tropicalis</name>
    <dbReference type="NCBI Taxonomy" id="8364"/>
    <lineage>
        <taxon>Eukaryota</taxon>
        <taxon>Metazoa</taxon>
        <taxon>Chordata</taxon>
        <taxon>Craniata</taxon>
        <taxon>Vertebrata</taxon>
        <taxon>Euteleostomi</taxon>
        <taxon>Amphibia</taxon>
        <taxon>Batrachia</taxon>
        <taxon>Anura</taxon>
        <taxon>Pipoidea</taxon>
        <taxon>Pipidae</taxon>
        <taxon>Xenopodinae</taxon>
        <taxon>Xenopus</taxon>
        <taxon>Silurana</taxon>
    </lineage>
</organism>
<gene>
    <name evidence="1" type="primary">setd3</name>
    <name evidence="5" type="ORF">TEgg034h09.1</name>
</gene>
<protein>
    <recommendedName>
        <fullName evidence="1">Actin-histidine N-methyltransferase</fullName>
        <ecNumber evidence="1">2.1.1.85</ecNumber>
    </recommendedName>
    <alternativeName>
        <fullName evidence="6">Protein-L-histidine N-tele-methyltransferase</fullName>
    </alternativeName>
    <alternativeName>
        <fullName evidence="6">SET domain-containing protein 3</fullName>
    </alternativeName>
</protein>
<reference key="1">
    <citation type="submission" date="2006-10" db="EMBL/GenBank/DDBJ databases">
        <authorList>
            <consortium name="Sanger Xenopus tropicalis EST/cDNA project"/>
        </authorList>
    </citation>
    <scope>NUCLEOTIDE SEQUENCE [LARGE SCALE MRNA]</scope>
    <source>
        <tissue>Egg</tissue>
    </source>
</reference>
<reference key="2">
    <citation type="submission" date="2008-11" db="EMBL/GenBank/DDBJ databases">
        <authorList>
            <consortium name="NIH - Xenopus Gene Collection (XGC) project"/>
        </authorList>
    </citation>
    <scope>NUCLEOTIDE SEQUENCE [LARGE SCALE MRNA]</scope>
    <source>
        <tissue>Neurula</tissue>
    </source>
</reference>
<proteinExistence type="evidence at transcript level"/>